<proteinExistence type="evidence at transcript level"/>
<keyword id="KW-0966">Cell projection</keyword>
<keyword id="KW-0969">Cilium</keyword>
<keyword id="KW-0970">Cilium biogenesis/degradation</keyword>
<keyword id="KW-0175">Coiled coil</keyword>
<keyword id="KW-1185">Reference proteome</keyword>
<keyword id="KW-0677">Repeat</keyword>
<keyword id="KW-0802">TPR repeat</keyword>
<gene>
    <name type="primary">Ift70a2</name>
    <name evidence="5" type="synonym">Ttc30a1</name>
    <name type="synonym">Ttc30a2</name>
</gene>
<protein>
    <recommendedName>
        <fullName>Intraflagellar transport protein 70A2</fullName>
    </recommendedName>
    <alternativeName>
        <fullName>Tetratricopeptide repeat protein 30A2</fullName>
        <shortName>TPR repeat protein 30A2</shortName>
    </alternativeName>
</protein>
<organism>
    <name type="scientific">Rattus norvegicus</name>
    <name type="common">Rat</name>
    <dbReference type="NCBI Taxonomy" id="10116"/>
    <lineage>
        <taxon>Eukaryota</taxon>
        <taxon>Metazoa</taxon>
        <taxon>Chordata</taxon>
        <taxon>Craniata</taxon>
        <taxon>Vertebrata</taxon>
        <taxon>Euteleostomi</taxon>
        <taxon>Mammalia</taxon>
        <taxon>Eutheria</taxon>
        <taxon>Euarchontoglires</taxon>
        <taxon>Glires</taxon>
        <taxon>Rodentia</taxon>
        <taxon>Myomorpha</taxon>
        <taxon>Muroidea</taxon>
        <taxon>Muridae</taxon>
        <taxon>Murinae</taxon>
        <taxon>Rattus</taxon>
    </lineage>
</organism>
<accession>Q4QQS2</accession>
<comment type="function">
    <text evidence="1">Required for polyglutamylation of axonemal tubulin. Plays a role in anterograde intraflagellar transport (IFT), the process by which cilia precursors are transported from the base of the cilium to the site of their incorporation at the tip.</text>
</comment>
<comment type="subunit">
    <text evidence="2">Interacts wit the IFT B complex component IFT52.</text>
</comment>
<comment type="subcellular location">
    <subcellularLocation>
        <location evidence="1">Cell projection</location>
        <location evidence="1">Cilium</location>
    </subcellularLocation>
</comment>
<comment type="similarity">
    <text evidence="4">Belongs to the TTC30/dfy-1/fleer family.</text>
</comment>
<reference key="1">
    <citation type="journal article" date="2004" name="Genome Res.">
        <title>The status, quality, and expansion of the NIH full-length cDNA project: the Mammalian Gene Collection (MGC).</title>
        <authorList>
            <consortium name="The MGC Project Team"/>
        </authorList>
    </citation>
    <scope>NUCLEOTIDE SEQUENCE [LARGE SCALE MRNA]</scope>
    <source>
        <tissue>Testis</tissue>
    </source>
</reference>
<feature type="chain" id="PRO_0000333205" description="Intraflagellar transport protein 70A2">
    <location>
        <begin position="1"/>
        <end position="664"/>
    </location>
</feature>
<feature type="repeat" description="TPR 1">
    <location>
        <begin position="11"/>
        <end position="44"/>
    </location>
</feature>
<feature type="repeat" description="TPR 2">
    <location>
        <begin position="45"/>
        <end position="78"/>
    </location>
</feature>
<feature type="repeat" description="TPR 3">
    <location>
        <begin position="153"/>
        <end position="186"/>
    </location>
</feature>
<feature type="repeat" description="TPR 4">
    <location>
        <begin position="188"/>
        <end position="220"/>
    </location>
</feature>
<feature type="repeat" description="TPR 5">
    <location>
        <begin position="395"/>
        <end position="423"/>
    </location>
</feature>
<feature type="repeat" description="TPR 6">
    <location>
        <begin position="424"/>
        <end position="456"/>
    </location>
</feature>
<feature type="repeat" description="TPR 7">
    <location>
        <begin position="458"/>
        <end position="491"/>
    </location>
</feature>
<feature type="repeat" description="TPR 8">
    <location>
        <begin position="543"/>
        <end position="576"/>
    </location>
</feature>
<feature type="coiled-coil region" evidence="3">
    <location>
        <begin position="507"/>
        <end position="534"/>
    </location>
</feature>
<name>I70A2_RAT</name>
<dbReference type="EMBL" id="BC098051">
    <property type="protein sequence ID" value="AAH98051.1"/>
    <property type="molecule type" value="mRNA"/>
</dbReference>
<dbReference type="RefSeq" id="NP_001025089.1">
    <property type="nucleotide sequence ID" value="NM_001029918.1"/>
</dbReference>
<dbReference type="SMR" id="Q4QQS2"/>
<dbReference type="FunCoup" id="Q4QQS2">
    <property type="interactions" value="192"/>
</dbReference>
<dbReference type="STRING" id="10116.ENSRNOP00000013565"/>
<dbReference type="PhosphoSitePlus" id="Q4QQS2"/>
<dbReference type="PaxDb" id="10116-ENSRNOP00000045862"/>
<dbReference type="Ensembl" id="ENSRNOT00000013565.5">
    <property type="protein sequence ID" value="ENSRNOP00000013565.3"/>
    <property type="gene ID" value="ENSRNOG00000052519.2"/>
</dbReference>
<dbReference type="GeneID" id="311123"/>
<dbReference type="KEGG" id="rno:311123"/>
<dbReference type="AGR" id="RGD:1560121"/>
<dbReference type="CTD" id="620631"/>
<dbReference type="RGD" id="1560121">
    <property type="gene designation" value="Ift70a2"/>
</dbReference>
<dbReference type="eggNOG" id="KOG4340">
    <property type="taxonomic scope" value="Eukaryota"/>
</dbReference>
<dbReference type="GeneTree" id="ENSGT00390000010116"/>
<dbReference type="HOGENOM" id="CLU_023760_0_0_1"/>
<dbReference type="InParanoid" id="Q4QQS2"/>
<dbReference type="OMA" id="CCKHELY"/>
<dbReference type="OrthoDB" id="10249577at2759"/>
<dbReference type="TreeFam" id="TF314592"/>
<dbReference type="Reactome" id="R-RNO-5620924">
    <property type="pathway name" value="Intraflagellar transport"/>
</dbReference>
<dbReference type="PRO" id="PR:Q4QQS2"/>
<dbReference type="Proteomes" id="UP000002494">
    <property type="component" value="Chromosome 3"/>
</dbReference>
<dbReference type="Bgee" id="ENSRNOG00000052519">
    <property type="expression patterns" value="Expressed in testis and 18 other cell types or tissues"/>
</dbReference>
<dbReference type="GO" id="GO:0005879">
    <property type="term" value="C:axonemal microtubule"/>
    <property type="evidence" value="ECO:0000318"/>
    <property type="project" value="GO_Central"/>
</dbReference>
<dbReference type="GO" id="GO:0030992">
    <property type="term" value="C:intraciliary transport particle B"/>
    <property type="evidence" value="ECO:0000266"/>
    <property type="project" value="RGD"/>
</dbReference>
<dbReference type="GO" id="GO:0120170">
    <property type="term" value="F:intraciliary transport particle B binding"/>
    <property type="evidence" value="ECO:0000318"/>
    <property type="project" value="GO_Central"/>
</dbReference>
<dbReference type="GO" id="GO:0042073">
    <property type="term" value="P:intraciliary transport"/>
    <property type="evidence" value="ECO:0000318"/>
    <property type="project" value="GO_Central"/>
</dbReference>
<dbReference type="FunFam" id="1.25.40.10:FF:000226">
    <property type="entry name" value="Tetratricopeptide repeat protein 30A"/>
    <property type="match status" value="1"/>
</dbReference>
<dbReference type="FunFam" id="1.25.40.10:FF:000211">
    <property type="entry name" value="tetratricopeptide repeat protein 30B"/>
    <property type="match status" value="1"/>
</dbReference>
<dbReference type="Gene3D" id="1.25.40.10">
    <property type="entry name" value="Tetratricopeptide repeat domain"/>
    <property type="match status" value="2"/>
</dbReference>
<dbReference type="InterPro" id="IPR011990">
    <property type="entry name" value="TPR-like_helical_dom_sf"/>
</dbReference>
<dbReference type="InterPro" id="IPR019734">
    <property type="entry name" value="TPR_rpt"/>
</dbReference>
<dbReference type="InterPro" id="IPR039941">
    <property type="entry name" value="TT30"/>
</dbReference>
<dbReference type="PANTHER" id="PTHR20931:SF4">
    <property type="entry name" value="INTRAFLAGELLAR TRANSPORT PROTEIN 70A2"/>
    <property type="match status" value="1"/>
</dbReference>
<dbReference type="PANTHER" id="PTHR20931">
    <property type="entry name" value="TETRATRICOPEPTIDE REPEAT PROTEIN 30"/>
    <property type="match status" value="1"/>
</dbReference>
<dbReference type="Pfam" id="PF13432">
    <property type="entry name" value="TPR_16"/>
    <property type="match status" value="1"/>
</dbReference>
<dbReference type="SMART" id="SM00028">
    <property type="entry name" value="TPR"/>
    <property type="match status" value="4"/>
</dbReference>
<dbReference type="SUPFAM" id="SSF48452">
    <property type="entry name" value="TPR-like"/>
    <property type="match status" value="2"/>
</dbReference>
<dbReference type="PROSITE" id="PS50293">
    <property type="entry name" value="TPR_REGION"/>
    <property type="match status" value="3"/>
</dbReference>
<evidence type="ECO:0000250" key="1"/>
<evidence type="ECO:0000250" key="2">
    <source>
        <dbReference type="UniProtKB" id="A2AKQ8"/>
    </source>
</evidence>
<evidence type="ECO:0000255" key="3"/>
<evidence type="ECO:0000305" key="4"/>
<evidence type="ECO:0000312" key="5">
    <source>
        <dbReference type="RGD" id="1560121"/>
    </source>
</evidence>
<sequence length="664" mass="76065">MAGLSSSQIPDGEFTAVVYRLIRDSRYSEAVQLLSAELQRSPRSRAGLSLLAYCYYRLQEFELAAECYEQLSQMHPELEQYRLYQAQALYKACLYPEATRVAFLLDNPSFYSRVLRLQAAIKYSEGDLPGARSLVEQLLSGEAGEDSGGENDPDGLVNMGCLLYKEGHYEAACSKFFAALQASGYQPDVSYNLALACYSNRHYAPALKHIANIIERGIRQHPELGVGMTTEGIDVRSVGNTVVLHQTALVEAFNLKAAIEYQLRNFEAAQEALTDMPPRAEEELDPVTLHNQALMNMDAKPTEGFEKLQFLLQQNPFPPETFGNLLLLYCKYEYFDLAADVLAENAHLTYKFLTPYLYDFLDAMITCQTAPEEAFIKLDGLAGMLTEQLRRLTKQVQEARHNRDDEVVIKAVNEYDETLEKYIPVLMAQAKIYWNLENYQMVEKIFRKSVEFCNDHDVWKLNVAHVLFMQENKYKEAIGFYEPIVKKNYDNILSVSAIVLANLCVSYIMTSQNEEAEELMRKIEKEEEQLSYGDPDKKIYHLCIVNLVIGTLYCAKGNYDFGISRVIKSLEPYHKKLGTDTWYYAKRCFLSLLENMSKHTIMLRDSVIQECVQFLEHCEIFGRSIPAVIEQPLEEERMHTGKNTVTYESRQLKALIYEIIGWNM</sequence>